<organism>
    <name type="scientific">Rickettsia conorii (strain ATCC VR-613 / Malish 7)</name>
    <dbReference type="NCBI Taxonomy" id="272944"/>
    <lineage>
        <taxon>Bacteria</taxon>
        <taxon>Pseudomonadati</taxon>
        <taxon>Pseudomonadota</taxon>
        <taxon>Alphaproteobacteria</taxon>
        <taxon>Rickettsiales</taxon>
        <taxon>Rickettsiaceae</taxon>
        <taxon>Rickettsieae</taxon>
        <taxon>Rickettsia</taxon>
        <taxon>spotted fever group</taxon>
    </lineage>
</organism>
<gene>
    <name evidence="1" type="primary">rplY</name>
    <name evidence="1" type="synonym">ctc</name>
    <name type="ordered locus">RC0932</name>
</gene>
<evidence type="ECO:0000255" key="1">
    <source>
        <dbReference type="HAMAP-Rule" id="MF_01334"/>
    </source>
</evidence>
<evidence type="ECO:0000305" key="2"/>
<dbReference type="EMBL" id="AE006914">
    <property type="protein sequence ID" value="AAL03470.1"/>
    <property type="molecule type" value="Genomic_DNA"/>
</dbReference>
<dbReference type="PIR" id="D97816">
    <property type="entry name" value="D97816"/>
</dbReference>
<dbReference type="RefSeq" id="WP_010977531.1">
    <property type="nucleotide sequence ID" value="NC_003103.1"/>
</dbReference>
<dbReference type="SMR" id="Q92H40"/>
<dbReference type="GeneID" id="927739"/>
<dbReference type="KEGG" id="rco:RC0932"/>
<dbReference type="PATRIC" id="fig|272944.4.peg.1062"/>
<dbReference type="HOGENOM" id="CLU_075939_0_0_5"/>
<dbReference type="Proteomes" id="UP000000816">
    <property type="component" value="Chromosome"/>
</dbReference>
<dbReference type="GO" id="GO:0022625">
    <property type="term" value="C:cytosolic large ribosomal subunit"/>
    <property type="evidence" value="ECO:0007669"/>
    <property type="project" value="TreeGrafter"/>
</dbReference>
<dbReference type="GO" id="GO:0008097">
    <property type="term" value="F:5S rRNA binding"/>
    <property type="evidence" value="ECO:0007669"/>
    <property type="project" value="InterPro"/>
</dbReference>
<dbReference type="GO" id="GO:0003735">
    <property type="term" value="F:structural constituent of ribosome"/>
    <property type="evidence" value="ECO:0007669"/>
    <property type="project" value="InterPro"/>
</dbReference>
<dbReference type="GO" id="GO:0006412">
    <property type="term" value="P:translation"/>
    <property type="evidence" value="ECO:0007669"/>
    <property type="project" value="UniProtKB-UniRule"/>
</dbReference>
<dbReference type="CDD" id="cd00495">
    <property type="entry name" value="Ribosomal_L25_TL5_CTC"/>
    <property type="match status" value="1"/>
</dbReference>
<dbReference type="Gene3D" id="2.170.120.20">
    <property type="entry name" value="Ribosomal protein L25, beta domain"/>
    <property type="match status" value="1"/>
</dbReference>
<dbReference type="Gene3D" id="2.40.240.10">
    <property type="entry name" value="Ribosomal Protein L25, Chain P"/>
    <property type="match status" value="1"/>
</dbReference>
<dbReference type="HAMAP" id="MF_01336">
    <property type="entry name" value="Ribosomal_bL25"/>
    <property type="match status" value="1"/>
</dbReference>
<dbReference type="HAMAP" id="MF_01334">
    <property type="entry name" value="Ribosomal_bL25_CTC"/>
    <property type="match status" value="1"/>
</dbReference>
<dbReference type="InterPro" id="IPR020056">
    <property type="entry name" value="Rbsml_bL25/Gln-tRNA_synth_N"/>
</dbReference>
<dbReference type="InterPro" id="IPR011035">
    <property type="entry name" value="Ribosomal_bL25/Gln-tRNA_synth"/>
</dbReference>
<dbReference type="InterPro" id="IPR020057">
    <property type="entry name" value="Ribosomal_bL25_b-dom"/>
</dbReference>
<dbReference type="InterPro" id="IPR037121">
    <property type="entry name" value="Ribosomal_bL25_C"/>
</dbReference>
<dbReference type="InterPro" id="IPR001021">
    <property type="entry name" value="Ribosomal_bL25_long"/>
</dbReference>
<dbReference type="InterPro" id="IPR020055">
    <property type="entry name" value="Ribosomal_bL25_short"/>
</dbReference>
<dbReference type="InterPro" id="IPR029751">
    <property type="entry name" value="Ribosomal_L25_dom"/>
</dbReference>
<dbReference type="InterPro" id="IPR020930">
    <property type="entry name" value="Ribosomal_uL5_bac-type"/>
</dbReference>
<dbReference type="NCBIfam" id="TIGR00731">
    <property type="entry name" value="bL25_bact_ctc"/>
    <property type="match status" value="1"/>
</dbReference>
<dbReference type="NCBIfam" id="NF004128">
    <property type="entry name" value="PRK05618.1-2"/>
    <property type="match status" value="1"/>
</dbReference>
<dbReference type="NCBIfam" id="NF004612">
    <property type="entry name" value="PRK05943.1"/>
    <property type="match status" value="1"/>
</dbReference>
<dbReference type="PANTHER" id="PTHR33284">
    <property type="entry name" value="RIBOSOMAL PROTEIN L25/GLN-TRNA SYNTHETASE, ANTI-CODON-BINDING DOMAIN-CONTAINING PROTEIN"/>
    <property type="match status" value="1"/>
</dbReference>
<dbReference type="PANTHER" id="PTHR33284:SF1">
    <property type="entry name" value="RIBOSOMAL PROTEIN L25_GLN-TRNA SYNTHETASE, ANTI-CODON-BINDING DOMAIN-CONTAINING PROTEIN"/>
    <property type="match status" value="1"/>
</dbReference>
<dbReference type="Pfam" id="PF01386">
    <property type="entry name" value="Ribosomal_L25p"/>
    <property type="match status" value="1"/>
</dbReference>
<dbReference type="Pfam" id="PF14693">
    <property type="entry name" value="Ribosomal_TL5_C"/>
    <property type="match status" value="1"/>
</dbReference>
<dbReference type="SUPFAM" id="SSF50715">
    <property type="entry name" value="Ribosomal protein L25-like"/>
    <property type="match status" value="1"/>
</dbReference>
<accession>Q92H40</accession>
<keyword id="KW-0687">Ribonucleoprotein</keyword>
<keyword id="KW-0689">Ribosomal protein</keyword>
<keyword id="KW-0694">RNA-binding</keyword>
<keyword id="KW-0699">rRNA-binding</keyword>
<name>RL25_RICCN</name>
<protein>
    <recommendedName>
        <fullName evidence="1">Large ribosomal subunit protein bL25</fullName>
    </recommendedName>
    <alternativeName>
        <fullName evidence="2">50S ribosomal protein L25</fullName>
    </alternativeName>
    <alternativeName>
        <fullName evidence="1">General stress protein CTC</fullName>
    </alternativeName>
</protein>
<reference key="1">
    <citation type="journal article" date="2001" name="Science">
        <title>Mechanisms of evolution in Rickettsia conorii and R. prowazekii.</title>
        <authorList>
            <person name="Ogata H."/>
            <person name="Audic S."/>
            <person name="Renesto-Audiffren P."/>
            <person name="Fournier P.-E."/>
            <person name="Barbe V."/>
            <person name="Samson D."/>
            <person name="Roux V."/>
            <person name="Cossart P."/>
            <person name="Weissenbach J."/>
            <person name="Claverie J.-M."/>
            <person name="Raoult D."/>
        </authorList>
    </citation>
    <scope>NUCLEOTIDE SEQUENCE [LARGE SCALE GENOMIC DNA]</scope>
    <source>
        <strain>ATCC VR-613 / Malish 7</strain>
    </source>
</reference>
<proteinExistence type="inferred from homology"/>
<sequence length="203" mass="22610">MSEILELEAESRTEFGTGAARALRRAGRVPAIIYGAGKTPVSISLEEKEITKYYRKPAFISQLINLTIDKKKYKVLPKAVELHPVTDIVRHVDFVFLEEKTQKMEVPVVYEGKERALGVKRGGYFNIVKRRVTLLCDVNNIPRNVTIDVTNMPMATSLKSSKIELPKGCSFVTNKEFVLATIIGRRGAKTEAEGEQQAAEAGK</sequence>
<comment type="function">
    <text evidence="1">This is one of the proteins that binds to the 5S RNA in the ribosome where it forms part of the central protuberance.</text>
</comment>
<comment type="subunit">
    <text evidence="1">Part of the 50S ribosomal subunit; part of the 5S rRNA/L5/L18/L25 subcomplex. Contacts the 5S rRNA. Binds to the 5S rRNA independently of L5 and L18.</text>
</comment>
<comment type="similarity">
    <text evidence="1">Belongs to the bacterial ribosomal protein bL25 family. CTC subfamily.</text>
</comment>
<feature type="chain" id="PRO_0000181587" description="Large ribosomal subunit protein bL25">
    <location>
        <begin position="1"/>
        <end position="203"/>
    </location>
</feature>